<comment type="function">
    <text evidence="2">Catalyzes the ATP- and formate-dependent formylation of 5-aminoimidazole-4-carboxamide-1-beta-d-ribofuranosyl 5'-monophosphate (AICAR) to 5-formaminoimidazole-4-carboxamide-1-beta-d-ribofuranosyl 5'-monophosphate (FAICAR) in the absence of folates.</text>
</comment>
<comment type="catalytic activity">
    <reaction evidence="2">
        <text>5-amino-1-(5-phospho-beta-D-ribosyl)imidazole-4-carboxamide + formate + ATP = 5-formamido-1-(5-phospho-D-ribosyl)imidazole-4-carboxamide + ADP + phosphate</text>
        <dbReference type="Rhea" id="RHEA:24836"/>
        <dbReference type="ChEBI" id="CHEBI:15740"/>
        <dbReference type="ChEBI" id="CHEBI:30616"/>
        <dbReference type="ChEBI" id="CHEBI:43474"/>
        <dbReference type="ChEBI" id="CHEBI:58467"/>
        <dbReference type="ChEBI" id="CHEBI:58475"/>
        <dbReference type="ChEBI" id="CHEBI:456216"/>
        <dbReference type="EC" id="6.3.4.23"/>
    </reaction>
</comment>
<comment type="cofactor">
    <cofactor evidence="1">
        <name>Mg(2+)</name>
        <dbReference type="ChEBI" id="CHEBI:18420"/>
    </cofactor>
    <cofactor evidence="1">
        <name>Mn(2+)</name>
        <dbReference type="ChEBI" id="CHEBI:29035"/>
    </cofactor>
    <text evidence="1">Binds 1 Mg(2+) or Mn(2+) ion per subunit.</text>
</comment>
<comment type="pathway">
    <text evidence="2">Purine metabolism; IMP biosynthesis via de novo pathway; 5-formamido-1-(5-phospho-D-ribosyl)imidazole-4-carboxamide from 5-amino-1-(5-phospho-D-ribosyl)imidazole-4-carboxamide (formate route): step 1/1.</text>
</comment>
<comment type="similarity">
    <text evidence="2">Belongs to the phosphohexose mutase family.</text>
</comment>
<name>PURP_CENSY</name>
<keyword id="KW-0067">ATP-binding</keyword>
<keyword id="KW-0436">Ligase</keyword>
<keyword id="KW-0460">Magnesium</keyword>
<keyword id="KW-0464">Manganese</keyword>
<keyword id="KW-0479">Metal-binding</keyword>
<keyword id="KW-0547">Nucleotide-binding</keyword>
<keyword id="KW-0658">Purine biosynthesis</keyword>
<keyword id="KW-1185">Reference proteome</keyword>
<reference key="1">
    <citation type="journal article" date="2006" name="Proc. Natl. Acad. Sci. U.S.A.">
        <title>Genomic analysis of the uncultivated marine crenarchaeote Cenarchaeum symbiosum.</title>
        <authorList>
            <person name="Hallam S.J."/>
            <person name="Konstantinidis K.T."/>
            <person name="Putnam N."/>
            <person name="Schleper C."/>
            <person name="Watanabe Y."/>
            <person name="Sugahara J."/>
            <person name="Preston C."/>
            <person name="de la Torre J."/>
            <person name="Richardson P.M."/>
            <person name="DeLong E.F."/>
        </authorList>
    </citation>
    <scope>NUCLEOTIDE SEQUENCE [LARGE SCALE GENOMIC DNA]</scope>
    <source>
        <strain>A</strain>
    </source>
</reference>
<feature type="chain" id="PRO_0000348614" description="5-formaminoimidazole-4-carboxamide-1-(beta)-D-ribofuranosyl 5'-monophosphate synthetase">
    <location>
        <begin position="1"/>
        <end position="341"/>
    </location>
</feature>
<feature type="domain" description="ATP-grasp" evidence="2">
    <location>
        <begin position="106"/>
        <end position="317"/>
    </location>
</feature>
<feature type="binding site" evidence="2">
    <location>
        <position position="10"/>
    </location>
    <ligand>
        <name>5-amino-1-(5-phospho-beta-D-ribosyl)imidazole-4-carboxamide</name>
        <dbReference type="ChEBI" id="CHEBI:58475"/>
    </ligand>
</feature>
<feature type="binding site" evidence="2">
    <location>
        <position position="77"/>
    </location>
    <ligand>
        <name>5-amino-1-(5-phospho-beta-D-ribosyl)imidazole-4-carboxamide</name>
        <dbReference type="ChEBI" id="CHEBI:58475"/>
    </ligand>
</feature>
<feature type="binding site" evidence="2">
    <location>
        <begin position="132"/>
        <end position="188"/>
    </location>
    <ligand>
        <name>ATP</name>
        <dbReference type="ChEBI" id="CHEBI:30616"/>
    </ligand>
</feature>
<feature type="binding site" evidence="2">
    <location>
        <position position="210"/>
    </location>
    <ligand>
        <name>ATP</name>
        <dbReference type="ChEBI" id="CHEBI:30616"/>
    </ligand>
</feature>
<feature type="binding site" evidence="2">
    <location>
        <position position="238"/>
    </location>
    <ligand>
        <name>5-amino-1-(5-phospho-beta-D-ribosyl)imidazole-4-carboxamide</name>
        <dbReference type="ChEBI" id="CHEBI:58475"/>
    </ligand>
</feature>
<feature type="binding site" evidence="2">
    <location>
        <position position="277"/>
    </location>
    <ligand>
        <name>Mg(2+)</name>
        <dbReference type="ChEBI" id="CHEBI:18420"/>
    </ligand>
</feature>
<feature type="binding site" evidence="2">
    <location>
        <position position="290"/>
    </location>
    <ligand>
        <name>Mg(2+)</name>
        <dbReference type="ChEBI" id="CHEBI:18420"/>
    </ligand>
</feature>
<gene>
    <name evidence="2" type="primary">purP</name>
    <name type="ordered locus">CENSYa_0242</name>
</gene>
<proteinExistence type="inferred from homology"/>
<protein>
    <recommendedName>
        <fullName evidence="2">5-formaminoimidazole-4-carboxamide-1-(beta)-D-ribofuranosyl 5'-monophosphate synthetase</fullName>
        <ecNumber evidence="2">6.3.4.23</ecNumber>
    </recommendedName>
    <alternativeName>
        <fullName evidence="2">5-aminoimidazole-4-carboxamide-1-beta-D-ribofuranosyl 5'-monophosphate--formate ligase</fullName>
    </alternativeName>
</protein>
<sequence length="341" mass="38034">MKSVSTLGSHCSLQLLKGAKDEGFRTLLVCERRRERFYRRFGFIDELVLVDGFGELLGDECQSVLAENDSILIPHGTLVAQMSPDQIESIGVPVFGNKWILRWESDRSLKERLMREARLRMPRSIDSPGDIDTLVIVKRQGAAGGKGYFMANSEEEYESKRLSLIESGVISTDEDLYIQEYVPGVLAYLQFFYSPLKADIEFFGADQRHESDIEGLARIPAPVQMGSSGIPSFNVIGNSPLVLRESLLEGAYRMGEDFVEASSRLVAPGMNGPFCIEGVYGDDGRFTSFEFSARIVAGTNIYMNGSPYYGLLFDEPISMGRRIAREIKSAIAEERLDETVT</sequence>
<accession>A0RU67</accession>
<evidence type="ECO:0000250" key="1"/>
<evidence type="ECO:0000255" key="2">
    <source>
        <dbReference type="HAMAP-Rule" id="MF_01163"/>
    </source>
</evidence>
<organism>
    <name type="scientific">Cenarchaeum symbiosum (strain A)</name>
    <dbReference type="NCBI Taxonomy" id="414004"/>
    <lineage>
        <taxon>Archaea</taxon>
        <taxon>Nitrososphaerota</taxon>
        <taxon>Candidatus Cenarchaeales</taxon>
        <taxon>Candidatus Cenarchaeaceae</taxon>
        <taxon>Candidatus Cenarchaeum</taxon>
    </lineage>
</organism>
<dbReference type="EC" id="6.3.4.23" evidence="2"/>
<dbReference type="EMBL" id="DP000238">
    <property type="protein sequence ID" value="ABK76884.1"/>
    <property type="molecule type" value="Genomic_DNA"/>
</dbReference>
<dbReference type="SMR" id="A0RU67"/>
<dbReference type="STRING" id="414004.CENSYa_0242"/>
<dbReference type="EnsemblBacteria" id="ABK76884">
    <property type="protein sequence ID" value="ABK76884"/>
    <property type="gene ID" value="CENSYa_0242"/>
</dbReference>
<dbReference type="KEGG" id="csy:CENSYa_0242"/>
<dbReference type="PATRIC" id="fig|414004.10.peg.213"/>
<dbReference type="HOGENOM" id="CLU_065084_0_0_2"/>
<dbReference type="UniPathway" id="UPA00074">
    <property type="reaction ID" value="UER00134"/>
</dbReference>
<dbReference type="Proteomes" id="UP000000758">
    <property type="component" value="Chromosome"/>
</dbReference>
<dbReference type="GO" id="GO:0005524">
    <property type="term" value="F:ATP binding"/>
    <property type="evidence" value="ECO:0007669"/>
    <property type="project" value="UniProtKB-KW"/>
</dbReference>
<dbReference type="GO" id="GO:0016879">
    <property type="term" value="F:ligase activity, forming carbon-nitrogen bonds"/>
    <property type="evidence" value="ECO:0007669"/>
    <property type="project" value="UniProtKB-UniRule"/>
</dbReference>
<dbReference type="GO" id="GO:0000287">
    <property type="term" value="F:magnesium ion binding"/>
    <property type="evidence" value="ECO:0007669"/>
    <property type="project" value="InterPro"/>
</dbReference>
<dbReference type="GO" id="GO:0006189">
    <property type="term" value="P:'de novo' IMP biosynthetic process"/>
    <property type="evidence" value="ECO:0007669"/>
    <property type="project" value="UniProtKB-UniRule"/>
</dbReference>
<dbReference type="Gene3D" id="3.40.50.20">
    <property type="match status" value="1"/>
</dbReference>
<dbReference type="Gene3D" id="3.30.1490.20">
    <property type="entry name" value="ATP-grasp fold, A domain"/>
    <property type="match status" value="1"/>
</dbReference>
<dbReference type="Gene3D" id="3.30.470.20">
    <property type="entry name" value="ATP-grasp fold, B domain"/>
    <property type="match status" value="1"/>
</dbReference>
<dbReference type="HAMAP" id="MF_01163">
    <property type="entry name" value="IMP_biosynth_PurP"/>
    <property type="match status" value="1"/>
</dbReference>
<dbReference type="InterPro" id="IPR011761">
    <property type="entry name" value="ATP-grasp"/>
</dbReference>
<dbReference type="InterPro" id="IPR013815">
    <property type="entry name" value="ATP_grasp_subdomain_1"/>
</dbReference>
<dbReference type="InterPro" id="IPR023656">
    <property type="entry name" value="IMP_biosynth_PurP"/>
</dbReference>
<dbReference type="InterPro" id="IPR009720">
    <property type="entry name" value="IMP_biosynth_PurP_C"/>
</dbReference>
<dbReference type="InterPro" id="IPR010672">
    <property type="entry name" value="IMP_biosynth_PurP_N"/>
</dbReference>
<dbReference type="InterPro" id="IPR016185">
    <property type="entry name" value="PreATP-grasp_dom_sf"/>
</dbReference>
<dbReference type="PANTHER" id="PTHR38147:SF2">
    <property type="entry name" value="5-FORMAMINOIMIDAZOLE-4-CARBOXAMIDE-1-(BETA)-D-RIBOFURANOSYL 5'-MONOPHOSPHATE SYNTHETASE"/>
    <property type="match status" value="1"/>
</dbReference>
<dbReference type="PANTHER" id="PTHR38147">
    <property type="entry name" value="5-FORMAMINOIMIDAZOLE-4-CARBOXAMIDE-1-(BETA)-D-RIBOFURANOSYL 5'-MONOPHOSPHATE SYNTHETASE-RELATED"/>
    <property type="match status" value="1"/>
</dbReference>
<dbReference type="Pfam" id="PF06849">
    <property type="entry name" value="DUF1246"/>
    <property type="match status" value="1"/>
</dbReference>
<dbReference type="Pfam" id="PF06973">
    <property type="entry name" value="DUF1297"/>
    <property type="match status" value="1"/>
</dbReference>
<dbReference type="PIRSF" id="PIRSF004602">
    <property type="entry name" value="ATPgrasp_PurP"/>
    <property type="match status" value="1"/>
</dbReference>
<dbReference type="SUPFAM" id="SSF56059">
    <property type="entry name" value="Glutathione synthetase ATP-binding domain-like"/>
    <property type="match status" value="1"/>
</dbReference>
<dbReference type="SUPFAM" id="SSF52440">
    <property type="entry name" value="PreATP-grasp domain"/>
    <property type="match status" value="1"/>
</dbReference>
<dbReference type="PROSITE" id="PS50975">
    <property type="entry name" value="ATP_GRASP"/>
    <property type="match status" value="1"/>
</dbReference>